<reference key="1">
    <citation type="journal article" date="2009" name="Genome Res.">
        <title>Newly introduced genomic prophage islands are critical determinants of in vivo competitiveness in the Liverpool epidemic strain of Pseudomonas aeruginosa.</title>
        <authorList>
            <person name="Winstanley C."/>
            <person name="Langille M.G.I."/>
            <person name="Fothergill J.L."/>
            <person name="Kukavica-Ibrulj I."/>
            <person name="Paradis-Bleau C."/>
            <person name="Sanschagrin F."/>
            <person name="Thomson N.R."/>
            <person name="Winsor G.L."/>
            <person name="Quail M.A."/>
            <person name="Lennard N."/>
            <person name="Bignell A."/>
            <person name="Clarke L."/>
            <person name="Seeger K."/>
            <person name="Saunders D."/>
            <person name="Harris D."/>
            <person name="Parkhill J."/>
            <person name="Hancock R.E.W."/>
            <person name="Brinkman F.S.L."/>
            <person name="Levesque R.C."/>
        </authorList>
    </citation>
    <scope>NUCLEOTIDE SEQUENCE [LARGE SCALE GENOMIC DNA]</scope>
    <source>
        <strain>LESB58</strain>
    </source>
</reference>
<gene>
    <name evidence="1" type="primary">aceK</name>
    <name type="ordered locus">PLES_38091</name>
</gene>
<feature type="chain" id="PRO_1000133273" description="Isocitrate dehydrogenase kinase/phosphatase">
    <location>
        <begin position="1"/>
        <end position="577"/>
    </location>
</feature>
<feature type="active site" evidence="1">
    <location>
        <position position="374"/>
    </location>
</feature>
<feature type="binding site" evidence="1">
    <location>
        <begin position="318"/>
        <end position="324"/>
    </location>
    <ligand>
        <name>ATP</name>
        <dbReference type="ChEBI" id="CHEBI:30616"/>
    </ligand>
</feature>
<feature type="binding site" evidence="1">
    <location>
        <position position="339"/>
    </location>
    <ligand>
        <name>ATP</name>
        <dbReference type="ChEBI" id="CHEBI:30616"/>
    </ligand>
</feature>
<evidence type="ECO:0000255" key="1">
    <source>
        <dbReference type="HAMAP-Rule" id="MF_00747"/>
    </source>
</evidence>
<dbReference type="EC" id="2.7.11.5" evidence="1"/>
<dbReference type="EC" id="3.1.3.-" evidence="1"/>
<dbReference type="EMBL" id="FM209186">
    <property type="protein sequence ID" value="CAW28536.1"/>
    <property type="molecule type" value="Genomic_DNA"/>
</dbReference>
<dbReference type="RefSeq" id="WP_003133326.1">
    <property type="nucleotide sequence ID" value="NC_011770.1"/>
</dbReference>
<dbReference type="SMR" id="B7UVK3"/>
<dbReference type="KEGG" id="pag:PLES_38091"/>
<dbReference type="HOGENOM" id="CLU_033804_1_1_6"/>
<dbReference type="GO" id="GO:0005737">
    <property type="term" value="C:cytoplasm"/>
    <property type="evidence" value="ECO:0007669"/>
    <property type="project" value="UniProtKB-SubCell"/>
</dbReference>
<dbReference type="GO" id="GO:0008772">
    <property type="term" value="F:[isocitrate dehydrogenase (NADP+)] kinase activity"/>
    <property type="evidence" value="ECO:0007669"/>
    <property type="project" value="UniProtKB-UniRule"/>
</dbReference>
<dbReference type="GO" id="GO:0016208">
    <property type="term" value="F:AMP binding"/>
    <property type="evidence" value="ECO:0007669"/>
    <property type="project" value="TreeGrafter"/>
</dbReference>
<dbReference type="GO" id="GO:0005524">
    <property type="term" value="F:ATP binding"/>
    <property type="evidence" value="ECO:0007669"/>
    <property type="project" value="UniProtKB-UniRule"/>
</dbReference>
<dbReference type="GO" id="GO:0004721">
    <property type="term" value="F:phosphoprotein phosphatase activity"/>
    <property type="evidence" value="ECO:0007669"/>
    <property type="project" value="UniProtKB-KW"/>
</dbReference>
<dbReference type="GO" id="GO:0004674">
    <property type="term" value="F:protein serine/threonine kinase activity"/>
    <property type="evidence" value="ECO:0007669"/>
    <property type="project" value="UniProtKB-KW"/>
</dbReference>
<dbReference type="GO" id="GO:0006006">
    <property type="term" value="P:glucose metabolic process"/>
    <property type="evidence" value="ECO:0007669"/>
    <property type="project" value="InterPro"/>
</dbReference>
<dbReference type="GO" id="GO:0006097">
    <property type="term" value="P:glyoxylate cycle"/>
    <property type="evidence" value="ECO:0007669"/>
    <property type="project" value="UniProtKB-UniRule"/>
</dbReference>
<dbReference type="GO" id="GO:0006099">
    <property type="term" value="P:tricarboxylic acid cycle"/>
    <property type="evidence" value="ECO:0007669"/>
    <property type="project" value="UniProtKB-UniRule"/>
</dbReference>
<dbReference type="HAMAP" id="MF_00747">
    <property type="entry name" value="AceK"/>
    <property type="match status" value="1"/>
</dbReference>
<dbReference type="InterPro" id="IPR046855">
    <property type="entry name" value="AceK_kinase"/>
</dbReference>
<dbReference type="InterPro" id="IPR046854">
    <property type="entry name" value="AceK_regulatory"/>
</dbReference>
<dbReference type="InterPro" id="IPR010452">
    <property type="entry name" value="Isocitrate_DH_AceK"/>
</dbReference>
<dbReference type="NCBIfam" id="NF002804">
    <property type="entry name" value="PRK02946.1"/>
    <property type="match status" value="1"/>
</dbReference>
<dbReference type="PANTHER" id="PTHR39559">
    <property type="match status" value="1"/>
</dbReference>
<dbReference type="PANTHER" id="PTHR39559:SF1">
    <property type="entry name" value="ISOCITRATE DEHYDROGENASE KINASE_PHOSPHATASE"/>
    <property type="match status" value="1"/>
</dbReference>
<dbReference type="Pfam" id="PF06315">
    <property type="entry name" value="AceK_kinase"/>
    <property type="match status" value="1"/>
</dbReference>
<dbReference type="Pfam" id="PF20423">
    <property type="entry name" value="AceK_regulatory"/>
    <property type="match status" value="1"/>
</dbReference>
<dbReference type="PIRSF" id="PIRSF000719">
    <property type="entry name" value="AceK"/>
    <property type="match status" value="1"/>
</dbReference>
<protein>
    <recommendedName>
        <fullName evidence="1">Isocitrate dehydrogenase kinase/phosphatase</fullName>
        <shortName evidence="1">IDH kinase/phosphatase</shortName>
        <shortName evidence="1">IDHK/P</shortName>
        <ecNumber evidence="1">2.7.11.5</ecNumber>
        <ecNumber evidence="1">3.1.3.-</ecNumber>
    </recommendedName>
</protein>
<proteinExistence type="inferred from homology"/>
<sequence length="577" mass="66774">MVQSAPASEIAALILRGFDDYREQFREITDGARARFEQAQWQEAQRASAQRINLYEEKVAETVAGLRAGLADSELLDVERWPIIKSAYIAQIDLRLDDELAETWFNSIFCGLFSHDNISDGTMFVHTTRPSLRAHARAPYTRTYRPGGDLRQALEKIFDDYRFDVPYDDRERDLERIDALLHSNLPDWVCKDPDLAIELIGSVFYRNKGAYLVGRLFTPDEQWPLVFPLLHREGHGIQFDTVITDEAEVSIIFSFTRSYFMVDVPVPAELVAFLKRLLPGKHLAELYTSIGFYKQGKSEFYRALINHLATTDDRFVMAPGVRGMVMSVFTLPGFNTVFKIIKDRFNPSKSVDHATVIQKYQLVKNHDRVGRLADTQQFADFRFPVSKFEPECLAELLEVAPSTVVMEGDVVLIRHCWTERRMTPLNIYLENASEAQTREALNDYGLAIKQLAAANIFPGDMLLKNFGVTRHGRVVFYDYDEICYLTEVNFRYIPEPRFPEDEMSSEPWYSVGPNDVFPEEFPRFLFVDLNQRRLFAKLHGNLYDAKYWQGLQEQIREGKVIDVFPYRRQETPEQLLK</sequence>
<keyword id="KW-0067">ATP-binding</keyword>
<keyword id="KW-0963">Cytoplasm</keyword>
<keyword id="KW-0329">Glyoxylate bypass</keyword>
<keyword id="KW-0378">Hydrolase</keyword>
<keyword id="KW-0418">Kinase</keyword>
<keyword id="KW-0547">Nucleotide-binding</keyword>
<keyword id="KW-0904">Protein phosphatase</keyword>
<keyword id="KW-0723">Serine/threonine-protein kinase</keyword>
<keyword id="KW-0808">Transferase</keyword>
<keyword id="KW-0816">Tricarboxylic acid cycle</keyword>
<comment type="function">
    <text evidence="1">Bifunctional enzyme which can phosphorylate or dephosphorylate isocitrate dehydrogenase (IDH) on a specific serine residue. This is a regulatory mechanism which enables bacteria to bypass the Krebs cycle via the glyoxylate shunt in response to the source of carbon. When bacteria are grown on glucose, IDH is fully active and unphosphorylated, but when grown on acetate or ethanol, the activity of IDH declines drastically concomitant with its phosphorylation.</text>
</comment>
<comment type="catalytic activity">
    <reaction evidence="1">
        <text>L-seryl-[isocitrate dehydrogenase] + ATP = O-phospho-L-seryl-[isocitrate dehydrogenase] + ADP + H(+)</text>
        <dbReference type="Rhea" id="RHEA:43540"/>
        <dbReference type="Rhea" id="RHEA-COMP:10605"/>
        <dbReference type="Rhea" id="RHEA-COMP:10606"/>
        <dbReference type="ChEBI" id="CHEBI:15378"/>
        <dbReference type="ChEBI" id="CHEBI:29999"/>
        <dbReference type="ChEBI" id="CHEBI:30616"/>
        <dbReference type="ChEBI" id="CHEBI:83421"/>
        <dbReference type="ChEBI" id="CHEBI:456216"/>
        <dbReference type="EC" id="2.7.11.5"/>
    </reaction>
</comment>
<comment type="subcellular location">
    <subcellularLocation>
        <location evidence="1">Cytoplasm</location>
    </subcellularLocation>
</comment>
<comment type="similarity">
    <text evidence="1">Belongs to the AceK family.</text>
</comment>
<name>ACEK_PSEA8</name>
<accession>B7UVK3</accession>
<organism>
    <name type="scientific">Pseudomonas aeruginosa (strain LESB58)</name>
    <dbReference type="NCBI Taxonomy" id="557722"/>
    <lineage>
        <taxon>Bacteria</taxon>
        <taxon>Pseudomonadati</taxon>
        <taxon>Pseudomonadota</taxon>
        <taxon>Gammaproteobacteria</taxon>
        <taxon>Pseudomonadales</taxon>
        <taxon>Pseudomonadaceae</taxon>
        <taxon>Pseudomonas</taxon>
    </lineage>
</organism>